<protein>
    <recommendedName>
        <fullName evidence="1">Uridylate kinase</fullName>
        <shortName evidence="1">UK</shortName>
        <ecNumber evidence="1">2.7.4.22</ecNumber>
    </recommendedName>
    <alternativeName>
        <fullName evidence="1">Uridine monophosphate kinase</fullName>
        <shortName evidence="1">UMP kinase</shortName>
        <shortName evidence="1">UMPK</shortName>
    </alternativeName>
</protein>
<proteinExistence type="inferred from homology"/>
<keyword id="KW-0067">ATP-binding</keyword>
<keyword id="KW-0963">Cytoplasm</keyword>
<keyword id="KW-0418">Kinase</keyword>
<keyword id="KW-0547">Nucleotide-binding</keyword>
<keyword id="KW-0665">Pyrimidine biosynthesis</keyword>
<keyword id="KW-1185">Reference proteome</keyword>
<keyword id="KW-0808">Transferase</keyword>
<name>PYRH_HYPBU</name>
<dbReference type="EC" id="2.7.4.22" evidence="1"/>
<dbReference type="EMBL" id="CP000493">
    <property type="protein sequence ID" value="ABM80881.1"/>
    <property type="molecule type" value="Genomic_DNA"/>
</dbReference>
<dbReference type="RefSeq" id="WP_011822199.1">
    <property type="nucleotide sequence ID" value="NC_008818.1"/>
</dbReference>
<dbReference type="SMR" id="A2BLM0"/>
<dbReference type="STRING" id="415426.Hbut_1037"/>
<dbReference type="EnsemblBacteria" id="ABM80881">
    <property type="protein sequence ID" value="ABM80881"/>
    <property type="gene ID" value="Hbut_1037"/>
</dbReference>
<dbReference type="GeneID" id="4782769"/>
<dbReference type="KEGG" id="hbu:Hbut_1037"/>
<dbReference type="eggNOG" id="arCOG00858">
    <property type="taxonomic scope" value="Archaea"/>
</dbReference>
<dbReference type="HOGENOM" id="CLU_079546_0_0_2"/>
<dbReference type="OrthoDB" id="372251at2157"/>
<dbReference type="UniPathway" id="UPA00159">
    <property type="reaction ID" value="UER00275"/>
</dbReference>
<dbReference type="Proteomes" id="UP000002593">
    <property type="component" value="Chromosome"/>
</dbReference>
<dbReference type="GO" id="GO:0005737">
    <property type="term" value="C:cytoplasm"/>
    <property type="evidence" value="ECO:0007669"/>
    <property type="project" value="UniProtKB-SubCell"/>
</dbReference>
<dbReference type="GO" id="GO:0005524">
    <property type="term" value="F:ATP binding"/>
    <property type="evidence" value="ECO:0007669"/>
    <property type="project" value="UniProtKB-KW"/>
</dbReference>
<dbReference type="GO" id="GO:0033862">
    <property type="term" value="F:UMP kinase activity"/>
    <property type="evidence" value="ECO:0007669"/>
    <property type="project" value="UniProtKB-EC"/>
</dbReference>
<dbReference type="GO" id="GO:0044210">
    <property type="term" value="P:'de novo' CTP biosynthetic process"/>
    <property type="evidence" value="ECO:0007669"/>
    <property type="project" value="UniProtKB-UniRule"/>
</dbReference>
<dbReference type="GO" id="GO:0006225">
    <property type="term" value="P:UDP biosynthetic process"/>
    <property type="evidence" value="ECO:0007669"/>
    <property type="project" value="TreeGrafter"/>
</dbReference>
<dbReference type="CDD" id="cd04253">
    <property type="entry name" value="AAK_UMPK-PyrH-Pf"/>
    <property type="match status" value="1"/>
</dbReference>
<dbReference type="Gene3D" id="3.40.1160.10">
    <property type="entry name" value="Acetylglutamate kinase-like"/>
    <property type="match status" value="1"/>
</dbReference>
<dbReference type="HAMAP" id="MF_01220_A">
    <property type="entry name" value="PyrH_A"/>
    <property type="match status" value="1"/>
</dbReference>
<dbReference type="InterPro" id="IPR036393">
    <property type="entry name" value="AceGlu_kinase-like_sf"/>
</dbReference>
<dbReference type="InterPro" id="IPR001048">
    <property type="entry name" value="Asp/Glu/Uridylate_kinase"/>
</dbReference>
<dbReference type="InterPro" id="IPR011817">
    <property type="entry name" value="Uridylate_kinase"/>
</dbReference>
<dbReference type="InterPro" id="IPR011818">
    <property type="entry name" value="Uridylate_kinase_arch/spir"/>
</dbReference>
<dbReference type="NCBIfam" id="TIGR02076">
    <property type="entry name" value="pyrH_arch"/>
    <property type="match status" value="1"/>
</dbReference>
<dbReference type="PANTHER" id="PTHR42833">
    <property type="entry name" value="URIDYLATE KINASE"/>
    <property type="match status" value="1"/>
</dbReference>
<dbReference type="PANTHER" id="PTHR42833:SF4">
    <property type="entry name" value="URIDYLATE KINASE PUMPKIN, CHLOROPLASTIC"/>
    <property type="match status" value="1"/>
</dbReference>
<dbReference type="Pfam" id="PF00696">
    <property type="entry name" value="AA_kinase"/>
    <property type="match status" value="1"/>
</dbReference>
<dbReference type="PIRSF" id="PIRSF005650">
    <property type="entry name" value="Uridylate_kin"/>
    <property type="match status" value="1"/>
</dbReference>
<dbReference type="SUPFAM" id="SSF53633">
    <property type="entry name" value="Carbamate kinase-like"/>
    <property type="match status" value="1"/>
</dbReference>
<gene>
    <name evidence="1" type="primary">pyrH</name>
    <name type="ordered locus">Hbut_1037</name>
</gene>
<evidence type="ECO:0000255" key="1">
    <source>
        <dbReference type="HAMAP-Rule" id="MF_01220"/>
    </source>
</evidence>
<sequence>MPKGPVVIKVSGKYVNPEKPGLVKRYAQVLHELHSVGYRLVVVVGGGPEARRYIEAARELGLGKSFQDILGIEASRLNARLLIYALHPNAYPEPPRSIWELLEAYSTGLIVVAGGFQPGQSTSGVAALVAEAIGAELLVLATTVDGVYTADPAVDKSAQLIPRLSYEEFRRVVRQSMSPGRYELLDPVAISIVERSNIPVRVVNGSDPENVKRVVLGEELGSLITG</sequence>
<feature type="chain" id="PRO_0000323988" description="Uridylate kinase">
    <location>
        <begin position="1"/>
        <end position="226"/>
    </location>
</feature>
<feature type="binding site" evidence="1">
    <location>
        <begin position="9"/>
        <end position="13"/>
    </location>
    <ligand>
        <name>ATP</name>
        <dbReference type="ChEBI" id="CHEBI:30616"/>
    </ligand>
</feature>
<feature type="binding site" evidence="1">
    <location>
        <position position="46"/>
    </location>
    <ligand>
        <name>UMP</name>
        <dbReference type="ChEBI" id="CHEBI:57865"/>
    </ligand>
</feature>
<feature type="binding site" evidence="1">
    <location>
        <position position="47"/>
    </location>
    <ligand>
        <name>ATP</name>
        <dbReference type="ChEBI" id="CHEBI:30616"/>
    </ligand>
</feature>
<feature type="binding site" evidence="1">
    <location>
        <position position="51"/>
    </location>
    <ligand>
        <name>ATP</name>
        <dbReference type="ChEBI" id="CHEBI:30616"/>
    </ligand>
</feature>
<feature type="binding site" evidence="1">
    <location>
        <position position="68"/>
    </location>
    <ligand>
        <name>UMP</name>
        <dbReference type="ChEBI" id="CHEBI:57865"/>
    </ligand>
</feature>
<feature type="binding site" evidence="1">
    <location>
        <begin position="116"/>
        <end position="122"/>
    </location>
    <ligand>
        <name>UMP</name>
        <dbReference type="ChEBI" id="CHEBI:57865"/>
    </ligand>
</feature>
<feature type="binding site" evidence="1">
    <location>
        <position position="142"/>
    </location>
    <ligand>
        <name>ATP</name>
        <dbReference type="ChEBI" id="CHEBI:30616"/>
    </ligand>
</feature>
<feature type="binding site" evidence="1">
    <location>
        <position position="148"/>
    </location>
    <ligand>
        <name>ATP</name>
        <dbReference type="ChEBI" id="CHEBI:30616"/>
    </ligand>
</feature>
<feature type="binding site" evidence="1">
    <location>
        <position position="151"/>
    </location>
    <ligand>
        <name>ATP</name>
        <dbReference type="ChEBI" id="CHEBI:30616"/>
    </ligand>
</feature>
<reference key="1">
    <citation type="journal article" date="2007" name="Archaea">
        <title>The genome of Hyperthermus butylicus: a sulfur-reducing, peptide fermenting, neutrophilic Crenarchaeote growing up to 108 degrees C.</title>
        <authorList>
            <person name="Bruegger K."/>
            <person name="Chen L."/>
            <person name="Stark M."/>
            <person name="Zibat A."/>
            <person name="Redder P."/>
            <person name="Ruepp A."/>
            <person name="Awayez M."/>
            <person name="She Q."/>
            <person name="Garrett R.A."/>
            <person name="Klenk H.-P."/>
        </authorList>
    </citation>
    <scope>NUCLEOTIDE SEQUENCE [LARGE SCALE GENOMIC DNA]</scope>
    <source>
        <strain>DSM 5456 / JCM 9403 / PLM1-5</strain>
    </source>
</reference>
<organism>
    <name type="scientific">Hyperthermus butylicus (strain DSM 5456 / JCM 9403 / PLM1-5)</name>
    <dbReference type="NCBI Taxonomy" id="415426"/>
    <lineage>
        <taxon>Archaea</taxon>
        <taxon>Thermoproteota</taxon>
        <taxon>Thermoprotei</taxon>
        <taxon>Desulfurococcales</taxon>
        <taxon>Pyrodictiaceae</taxon>
        <taxon>Hyperthermus</taxon>
    </lineage>
</organism>
<accession>A2BLM0</accession>
<comment type="function">
    <text evidence="1">Catalyzes the reversible phosphorylation of UMP to UDP.</text>
</comment>
<comment type="catalytic activity">
    <reaction evidence="1">
        <text>UMP + ATP = UDP + ADP</text>
        <dbReference type="Rhea" id="RHEA:24400"/>
        <dbReference type="ChEBI" id="CHEBI:30616"/>
        <dbReference type="ChEBI" id="CHEBI:57865"/>
        <dbReference type="ChEBI" id="CHEBI:58223"/>
        <dbReference type="ChEBI" id="CHEBI:456216"/>
        <dbReference type="EC" id="2.7.4.22"/>
    </reaction>
</comment>
<comment type="activity regulation">
    <text evidence="1">Inhibited by UTP.</text>
</comment>
<comment type="pathway">
    <text evidence="1">Pyrimidine metabolism; CTP biosynthesis via de novo pathway; UDP from UMP (UMPK route): step 1/1.</text>
</comment>
<comment type="subunit">
    <text evidence="1">Homohexamer.</text>
</comment>
<comment type="subcellular location">
    <subcellularLocation>
        <location evidence="1">Cytoplasm</location>
    </subcellularLocation>
</comment>
<comment type="similarity">
    <text evidence="1">Belongs to the UMP kinase family.</text>
</comment>